<organism>
    <name type="scientific">Escherichia coli O7:K1 (strain IAI39 / ExPEC)</name>
    <dbReference type="NCBI Taxonomy" id="585057"/>
    <lineage>
        <taxon>Bacteria</taxon>
        <taxon>Pseudomonadati</taxon>
        <taxon>Pseudomonadota</taxon>
        <taxon>Gammaproteobacteria</taxon>
        <taxon>Enterobacterales</taxon>
        <taxon>Enterobacteriaceae</taxon>
        <taxon>Escherichia</taxon>
    </lineage>
</organism>
<accession>B7NMN1</accession>
<keyword id="KW-0030">Aminoacyl-tRNA synthetase</keyword>
<keyword id="KW-0067">ATP-binding</keyword>
<keyword id="KW-0963">Cytoplasm</keyword>
<keyword id="KW-0436">Ligase</keyword>
<keyword id="KW-0547">Nucleotide-binding</keyword>
<keyword id="KW-0648">Protein biosynthesis</keyword>
<comment type="catalytic activity">
    <reaction evidence="1">
        <text>tRNA(Gln) + L-glutamine + ATP = L-glutaminyl-tRNA(Gln) + AMP + diphosphate</text>
        <dbReference type="Rhea" id="RHEA:20121"/>
        <dbReference type="Rhea" id="RHEA-COMP:9662"/>
        <dbReference type="Rhea" id="RHEA-COMP:9681"/>
        <dbReference type="ChEBI" id="CHEBI:30616"/>
        <dbReference type="ChEBI" id="CHEBI:33019"/>
        <dbReference type="ChEBI" id="CHEBI:58359"/>
        <dbReference type="ChEBI" id="CHEBI:78442"/>
        <dbReference type="ChEBI" id="CHEBI:78521"/>
        <dbReference type="ChEBI" id="CHEBI:456215"/>
        <dbReference type="EC" id="6.1.1.18"/>
    </reaction>
</comment>
<comment type="subunit">
    <text evidence="1">Monomer.</text>
</comment>
<comment type="subcellular location">
    <subcellularLocation>
        <location evidence="1">Cytoplasm</location>
    </subcellularLocation>
</comment>
<comment type="similarity">
    <text evidence="1">Belongs to the class-I aminoacyl-tRNA synthetase family.</text>
</comment>
<protein>
    <recommendedName>
        <fullName evidence="1">Glutamine--tRNA ligase</fullName>
        <ecNumber evidence="1">6.1.1.18</ecNumber>
    </recommendedName>
    <alternativeName>
        <fullName evidence="1">Glutaminyl-tRNA synthetase</fullName>
        <shortName evidence="1">GlnRS</shortName>
    </alternativeName>
</protein>
<sequence length="554" mass="63522">MSEAEARPTNFIRQIIDEDLASGKHTTVHTRFPPEPNGYLHIGHAKSICLNFGIAQDYKGQCNLRFDDTNPVKEDIEYVESIKNDVEWLGFHWSGNVRYSSDYFDQLHAYAIELINKGLAYVDELTPEQIREYRGTLTQPGKNSPYRDRSVEENLALFEKMRTGGFEEGKACLRAKIDMASPFIVMRDPVLYRIKFAEHHQTGNKWCIYPMYDFTHCISDALEGITHSLCTLEFQDNRRLYDWVLDNITIPVHPRQYEFSRLNLEYTVMSKRKLNLLVTDKHVEGWDDPRMPTISGLRRRGYTAASIREFCKRIGVTKQDNTIEMASLESCIREDLNENAPRAMAVIDPVKLVIENYQGEGEMVTMPNHPNKPEMGSRQVPFSGEIWIDRADFREEANKQYKRLVLGKEVRLRNAYVIKAERVEKDAEGNITTIFCTYDADTLSKDPADGRKVKGVIHWVSAAHALPIEIRLYDRLFSVPNPGAADDFLSVINPESLVIKQGFAEPSLKDAVAGKAFQFEREGYFCLDSRHSTAEKPVFNRTVGLRDTWAKVGE</sequence>
<proteinExistence type="inferred from homology"/>
<dbReference type="EC" id="6.1.1.18" evidence="1"/>
<dbReference type="EMBL" id="CU928164">
    <property type="protein sequence ID" value="CAR16774.1"/>
    <property type="molecule type" value="Genomic_DNA"/>
</dbReference>
<dbReference type="RefSeq" id="WP_001287162.1">
    <property type="nucleotide sequence ID" value="NC_011750.1"/>
</dbReference>
<dbReference type="RefSeq" id="YP_002406663.1">
    <property type="nucleotide sequence ID" value="NC_011750.1"/>
</dbReference>
<dbReference type="SMR" id="B7NMN1"/>
<dbReference type="STRING" id="585057.ECIAI39_0637"/>
<dbReference type="KEGG" id="ect:ECIAI39_0637"/>
<dbReference type="PATRIC" id="fig|585057.6.peg.680"/>
<dbReference type="HOGENOM" id="CLU_001882_2_3_6"/>
<dbReference type="Proteomes" id="UP000000749">
    <property type="component" value="Chromosome"/>
</dbReference>
<dbReference type="GO" id="GO:0005829">
    <property type="term" value="C:cytosol"/>
    <property type="evidence" value="ECO:0007669"/>
    <property type="project" value="TreeGrafter"/>
</dbReference>
<dbReference type="GO" id="GO:0005524">
    <property type="term" value="F:ATP binding"/>
    <property type="evidence" value="ECO:0007669"/>
    <property type="project" value="UniProtKB-UniRule"/>
</dbReference>
<dbReference type="GO" id="GO:0004819">
    <property type="term" value="F:glutamine-tRNA ligase activity"/>
    <property type="evidence" value="ECO:0007669"/>
    <property type="project" value="UniProtKB-UniRule"/>
</dbReference>
<dbReference type="GO" id="GO:0006425">
    <property type="term" value="P:glutaminyl-tRNA aminoacylation"/>
    <property type="evidence" value="ECO:0007669"/>
    <property type="project" value="InterPro"/>
</dbReference>
<dbReference type="GO" id="GO:0006424">
    <property type="term" value="P:glutamyl-tRNA aminoacylation"/>
    <property type="evidence" value="ECO:0007669"/>
    <property type="project" value="UniProtKB-UniRule"/>
</dbReference>
<dbReference type="CDD" id="cd00807">
    <property type="entry name" value="GlnRS_core"/>
    <property type="match status" value="1"/>
</dbReference>
<dbReference type="FunFam" id="1.10.1160.10:FF:000001">
    <property type="entry name" value="Glutamine--tRNA ligase"/>
    <property type="match status" value="1"/>
</dbReference>
<dbReference type="FunFam" id="2.40.240.10:FF:000001">
    <property type="entry name" value="Glutamine--tRNA ligase"/>
    <property type="match status" value="1"/>
</dbReference>
<dbReference type="FunFam" id="2.40.240.10:FF:000003">
    <property type="entry name" value="Glutamine--tRNA ligase"/>
    <property type="match status" value="1"/>
</dbReference>
<dbReference type="FunFam" id="3.90.800.10:FF:000001">
    <property type="entry name" value="Glutamine--tRNA ligase"/>
    <property type="match status" value="1"/>
</dbReference>
<dbReference type="FunFam" id="3.40.50.620:FF:000037">
    <property type="entry name" value="Glutamine--tRNA ligase cytoplasmic"/>
    <property type="match status" value="1"/>
</dbReference>
<dbReference type="Gene3D" id="1.10.1160.10">
    <property type="entry name" value="Glutamyl-trna Synthetase, Domain 2"/>
    <property type="match status" value="1"/>
</dbReference>
<dbReference type="Gene3D" id="3.90.800.10">
    <property type="entry name" value="Glutamyl-tRNA Synthetase, Domain 3"/>
    <property type="match status" value="1"/>
</dbReference>
<dbReference type="Gene3D" id="3.40.50.620">
    <property type="entry name" value="HUPs"/>
    <property type="match status" value="1"/>
</dbReference>
<dbReference type="Gene3D" id="2.40.240.10">
    <property type="entry name" value="Ribosomal Protein L25, Chain P"/>
    <property type="match status" value="2"/>
</dbReference>
<dbReference type="HAMAP" id="MF_00126">
    <property type="entry name" value="Gln_tRNA_synth"/>
    <property type="match status" value="1"/>
</dbReference>
<dbReference type="InterPro" id="IPR001412">
    <property type="entry name" value="aa-tRNA-synth_I_CS"/>
</dbReference>
<dbReference type="InterPro" id="IPR004514">
    <property type="entry name" value="Gln-tRNA-synth"/>
</dbReference>
<dbReference type="InterPro" id="IPR050132">
    <property type="entry name" value="Gln/Glu-tRNA_Ligase"/>
</dbReference>
<dbReference type="InterPro" id="IPR022861">
    <property type="entry name" value="Gln_tRNA_ligase_bac"/>
</dbReference>
<dbReference type="InterPro" id="IPR000924">
    <property type="entry name" value="Glu/Gln-tRNA-synth"/>
</dbReference>
<dbReference type="InterPro" id="IPR020058">
    <property type="entry name" value="Glu/Gln-tRNA-synth_Ib_cat-dom"/>
</dbReference>
<dbReference type="InterPro" id="IPR020059">
    <property type="entry name" value="Glu/Gln-tRNA-synth_Ib_codon-bd"/>
</dbReference>
<dbReference type="InterPro" id="IPR020061">
    <property type="entry name" value="Glu_tRNA_lig_a-bdl"/>
</dbReference>
<dbReference type="InterPro" id="IPR020056">
    <property type="entry name" value="Rbsml_bL25/Gln-tRNA_synth_N"/>
</dbReference>
<dbReference type="InterPro" id="IPR011035">
    <property type="entry name" value="Ribosomal_bL25/Gln-tRNA_synth"/>
</dbReference>
<dbReference type="InterPro" id="IPR014729">
    <property type="entry name" value="Rossmann-like_a/b/a_fold"/>
</dbReference>
<dbReference type="InterPro" id="IPR049437">
    <property type="entry name" value="tRNA-synt_1c_C2"/>
</dbReference>
<dbReference type="NCBIfam" id="TIGR00440">
    <property type="entry name" value="glnS"/>
    <property type="match status" value="1"/>
</dbReference>
<dbReference type="NCBIfam" id="NF011291">
    <property type="entry name" value="PRK14703.1"/>
    <property type="match status" value="1"/>
</dbReference>
<dbReference type="PANTHER" id="PTHR43097:SF5">
    <property type="entry name" value="GLUTAMATE--TRNA LIGASE"/>
    <property type="match status" value="1"/>
</dbReference>
<dbReference type="PANTHER" id="PTHR43097">
    <property type="entry name" value="GLUTAMINE-TRNA LIGASE"/>
    <property type="match status" value="1"/>
</dbReference>
<dbReference type="Pfam" id="PF00749">
    <property type="entry name" value="tRNA-synt_1c"/>
    <property type="match status" value="1"/>
</dbReference>
<dbReference type="Pfam" id="PF03950">
    <property type="entry name" value="tRNA-synt_1c_C"/>
    <property type="match status" value="1"/>
</dbReference>
<dbReference type="Pfam" id="PF20974">
    <property type="entry name" value="tRNA-synt_1c_C2"/>
    <property type="match status" value="1"/>
</dbReference>
<dbReference type="PRINTS" id="PR00987">
    <property type="entry name" value="TRNASYNTHGLU"/>
</dbReference>
<dbReference type="SUPFAM" id="SSF52374">
    <property type="entry name" value="Nucleotidylyl transferase"/>
    <property type="match status" value="1"/>
</dbReference>
<dbReference type="SUPFAM" id="SSF50715">
    <property type="entry name" value="Ribosomal protein L25-like"/>
    <property type="match status" value="1"/>
</dbReference>
<dbReference type="PROSITE" id="PS00178">
    <property type="entry name" value="AA_TRNA_LIGASE_I"/>
    <property type="match status" value="1"/>
</dbReference>
<feature type="chain" id="PRO_1000199098" description="Glutamine--tRNA ligase">
    <location>
        <begin position="1"/>
        <end position="554"/>
    </location>
</feature>
<feature type="region of interest" description="Interaction with tRNA" evidence="1">
    <location>
        <begin position="317"/>
        <end position="324"/>
    </location>
</feature>
<feature type="short sequence motif" description="'HIGH' region" evidence="1">
    <location>
        <begin position="34"/>
        <end position="44"/>
    </location>
</feature>
<feature type="short sequence motif" description="'KMSKS' region" evidence="1">
    <location>
        <begin position="268"/>
        <end position="272"/>
    </location>
</feature>
<feature type="binding site" evidence="1">
    <location>
        <begin position="35"/>
        <end position="37"/>
    </location>
    <ligand>
        <name>ATP</name>
        <dbReference type="ChEBI" id="CHEBI:30616"/>
    </ligand>
</feature>
<feature type="binding site" evidence="1">
    <location>
        <begin position="41"/>
        <end position="47"/>
    </location>
    <ligand>
        <name>ATP</name>
        <dbReference type="ChEBI" id="CHEBI:30616"/>
    </ligand>
</feature>
<feature type="binding site" evidence="1">
    <location>
        <position position="67"/>
    </location>
    <ligand>
        <name>L-glutamine</name>
        <dbReference type="ChEBI" id="CHEBI:58359"/>
    </ligand>
</feature>
<feature type="binding site" evidence="1">
    <location>
        <position position="212"/>
    </location>
    <ligand>
        <name>L-glutamine</name>
        <dbReference type="ChEBI" id="CHEBI:58359"/>
    </ligand>
</feature>
<feature type="binding site" evidence="1">
    <location>
        <position position="231"/>
    </location>
    <ligand>
        <name>ATP</name>
        <dbReference type="ChEBI" id="CHEBI:30616"/>
    </ligand>
</feature>
<feature type="binding site" evidence="1">
    <location>
        <begin position="261"/>
        <end position="262"/>
    </location>
    <ligand>
        <name>ATP</name>
        <dbReference type="ChEBI" id="CHEBI:30616"/>
    </ligand>
</feature>
<feature type="binding site" evidence="1">
    <location>
        <begin position="269"/>
        <end position="271"/>
    </location>
    <ligand>
        <name>ATP</name>
        <dbReference type="ChEBI" id="CHEBI:30616"/>
    </ligand>
</feature>
<name>SYQ_ECO7I</name>
<evidence type="ECO:0000255" key="1">
    <source>
        <dbReference type="HAMAP-Rule" id="MF_00126"/>
    </source>
</evidence>
<reference key="1">
    <citation type="journal article" date="2009" name="PLoS Genet.">
        <title>Organised genome dynamics in the Escherichia coli species results in highly diverse adaptive paths.</title>
        <authorList>
            <person name="Touchon M."/>
            <person name="Hoede C."/>
            <person name="Tenaillon O."/>
            <person name="Barbe V."/>
            <person name="Baeriswyl S."/>
            <person name="Bidet P."/>
            <person name="Bingen E."/>
            <person name="Bonacorsi S."/>
            <person name="Bouchier C."/>
            <person name="Bouvet O."/>
            <person name="Calteau A."/>
            <person name="Chiapello H."/>
            <person name="Clermont O."/>
            <person name="Cruveiller S."/>
            <person name="Danchin A."/>
            <person name="Diard M."/>
            <person name="Dossat C."/>
            <person name="Karoui M.E."/>
            <person name="Frapy E."/>
            <person name="Garry L."/>
            <person name="Ghigo J.M."/>
            <person name="Gilles A.M."/>
            <person name="Johnson J."/>
            <person name="Le Bouguenec C."/>
            <person name="Lescat M."/>
            <person name="Mangenot S."/>
            <person name="Martinez-Jehanne V."/>
            <person name="Matic I."/>
            <person name="Nassif X."/>
            <person name="Oztas S."/>
            <person name="Petit M.A."/>
            <person name="Pichon C."/>
            <person name="Rouy Z."/>
            <person name="Ruf C.S."/>
            <person name="Schneider D."/>
            <person name="Tourret J."/>
            <person name="Vacherie B."/>
            <person name="Vallenet D."/>
            <person name="Medigue C."/>
            <person name="Rocha E.P.C."/>
            <person name="Denamur E."/>
        </authorList>
    </citation>
    <scope>NUCLEOTIDE SEQUENCE [LARGE SCALE GENOMIC DNA]</scope>
    <source>
        <strain>IAI39 / ExPEC</strain>
    </source>
</reference>
<gene>
    <name evidence="1" type="primary">glnS</name>
    <name type="ordered locus">ECIAI39_0637</name>
</gene>